<sequence>MKRILTLTVAALALGTPALAYDGTNCKAPGNCWEPKPDYPAKVEGSKYDPQHDPAELSKQGESLAVMDARNEWRVWNMKKTGKFEYDVKKIDGYDETKAPPAE</sequence>
<proteinExistence type="evidence at protein level"/>
<gene>
    <name type="primary">moxI</name>
</gene>
<name>DHM2_PARDE</name>
<protein>
    <recommendedName>
        <fullName>Methanol dehydrogenase [cytochrome c] subunit 2</fullName>
        <ecNumber>1.1.2.7</ecNumber>
    </recommendedName>
    <alternativeName>
        <fullName>MDH small subunit beta</fullName>
    </alternativeName>
    <alternativeName>
        <fullName>MDH-associated peptide</fullName>
    </alternativeName>
    <alternativeName>
        <fullName>MEDH</fullName>
    </alternativeName>
</protein>
<comment type="function">
    <text evidence="1">Catalyzes the oxidation of primary alcohols including methanol.</text>
</comment>
<comment type="catalytic activity">
    <reaction>
        <text>2 Fe(III)-[cytochrome cL] + a primary alcohol = 2 Fe(II)-[cytochrome cL] + an aldehyde + 2 H(+)</text>
        <dbReference type="Rhea" id="RHEA:51004"/>
        <dbReference type="Rhea" id="RHEA-COMP:12863"/>
        <dbReference type="Rhea" id="RHEA-COMP:12864"/>
        <dbReference type="ChEBI" id="CHEBI:15378"/>
        <dbReference type="ChEBI" id="CHEBI:15734"/>
        <dbReference type="ChEBI" id="CHEBI:17478"/>
        <dbReference type="ChEBI" id="CHEBI:29033"/>
        <dbReference type="ChEBI" id="CHEBI:29034"/>
        <dbReference type="EC" id="1.1.2.7"/>
    </reaction>
</comment>
<comment type="subunit">
    <text evidence="3">Heterotetramer composed of 2 alpha and 2 beta subunits.</text>
</comment>
<comment type="subcellular location">
    <subcellularLocation>
        <location>Periplasm</location>
    </subcellularLocation>
</comment>
<comment type="similarity">
    <text evidence="4">Belongs to the methanol dehydrogenase subunit 2 family.</text>
</comment>
<dbReference type="EC" id="1.1.2.7"/>
<dbReference type="EMBL" id="M57684">
    <property type="protein sequence ID" value="AAA25584.1"/>
    <property type="molecule type" value="Genomic_DNA"/>
</dbReference>
<dbReference type="PIR" id="C41377">
    <property type="entry name" value="C41377"/>
</dbReference>
<dbReference type="RefSeq" id="WP_010399081.1">
    <property type="nucleotide sequence ID" value="NZ_JAOSHR010000012.1"/>
</dbReference>
<dbReference type="PDB" id="1LRW">
    <property type="method" value="X-ray"/>
    <property type="resolution" value="2.50 A"/>
    <property type="chains" value="B/D=21-103"/>
</dbReference>
<dbReference type="PDBsum" id="1LRW"/>
<dbReference type="SMR" id="P29898"/>
<dbReference type="OMA" id="PGNCWEP"/>
<dbReference type="BioCyc" id="MetaCyc:MONOMER-3924"/>
<dbReference type="EvolutionaryTrace" id="P29898"/>
<dbReference type="GO" id="GO:0042597">
    <property type="term" value="C:periplasmic space"/>
    <property type="evidence" value="ECO:0007669"/>
    <property type="project" value="UniProtKB-SubCell"/>
</dbReference>
<dbReference type="GO" id="GO:0052933">
    <property type="term" value="F:alcohol dehydrogenase (cytochrome c(L)) activity"/>
    <property type="evidence" value="ECO:0007669"/>
    <property type="project" value="UniProtKB-EC"/>
</dbReference>
<dbReference type="GO" id="GO:0004022">
    <property type="term" value="F:alcohol dehydrogenase (NAD+) activity"/>
    <property type="evidence" value="ECO:0007669"/>
    <property type="project" value="InterPro"/>
</dbReference>
<dbReference type="GO" id="GO:0015946">
    <property type="term" value="P:methanol oxidation"/>
    <property type="evidence" value="ECO:0007669"/>
    <property type="project" value="InterPro"/>
</dbReference>
<dbReference type="Gene3D" id="4.10.160.10">
    <property type="entry name" value="Methanol dehydrogenase, beta subunit"/>
    <property type="match status" value="1"/>
</dbReference>
<dbReference type="InterPro" id="IPR003420">
    <property type="entry name" value="Meth_DH_bsu"/>
</dbReference>
<dbReference type="InterPro" id="IPR036557">
    <property type="entry name" value="Meth_DH_bsu_sf"/>
</dbReference>
<dbReference type="Pfam" id="PF02315">
    <property type="entry name" value="MDH"/>
    <property type="match status" value="1"/>
</dbReference>
<dbReference type="PIRSF" id="PIRSF029163">
    <property type="entry name" value="Meth_DH_beta"/>
    <property type="match status" value="1"/>
</dbReference>
<dbReference type="SUPFAM" id="SSF48666">
    <property type="entry name" value="Methanol dehydrogenase subunit"/>
    <property type="match status" value="1"/>
</dbReference>
<keyword id="KW-0002">3D-structure</keyword>
<keyword id="KW-1015">Disulfide bond</keyword>
<keyword id="KW-0485">Methanol utilization</keyword>
<keyword id="KW-0560">Oxidoreductase</keyword>
<keyword id="KW-0574">Periplasm</keyword>
<keyword id="KW-0732">Signal</keyword>
<reference key="1">
    <citation type="journal article" date="1991" name="J. Bacteriol.">
        <title>Isolation and characterization of the moxJ, moxG, moxI, and moxR genes of Paracoccus denitrificans: inactivation of moxJ, moxG, and moxR and the resultant effect on methylotrophic growth.</title>
        <authorList>
            <person name="van Spanning R.J.M."/>
            <person name="Wansell C.W."/>
            <person name="de Boer T."/>
            <person name="Hazelaar M.J."/>
            <person name="Anazawa H."/>
            <person name="Harms N."/>
            <person name="Oltmann L.F."/>
            <person name="Stouthamer A.H."/>
        </authorList>
    </citation>
    <scope>NUCLEOTIDE SEQUENCE [GENOMIC DNA]</scope>
</reference>
<reference key="2">
    <citation type="journal article" date="2003" name="J. Biol. Inorg. Chem.">
        <title>X-ray structure of methanol dehydrogenase from Paracoccus denitrificans and molecular modeling of its interactions with cytochrome c-551i.</title>
        <authorList>
            <person name="Xia Z.-X."/>
            <person name="Dai W.W."/>
            <person name="He Y.-N."/>
            <person name="White S.A."/>
            <person name="Mathews F.S."/>
            <person name="Davidson V.L."/>
        </authorList>
    </citation>
    <scope>X-RAY CRYSTALLOGRAPHY (2.5 ANGSTROMS) OF 21-103 IN COMPLEX WITH ALPHA SUBUNIT</scope>
    <scope>SUBUNIT</scope>
    <scope>DISULFIDE BOND</scope>
</reference>
<accession>P29898</accession>
<feature type="signal peptide" evidence="2">
    <location>
        <begin position="1"/>
        <end position="20"/>
    </location>
</feature>
<feature type="chain" id="PRO_0000025571" description="Methanol dehydrogenase [cytochrome c] subunit 2">
    <location>
        <begin position="21"/>
        <end position="103"/>
    </location>
</feature>
<feature type="disulfide bond" evidence="3">
    <location>
        <begin position="26"/>
        <end position="32"/>
    </location>
</feature>
<feature type="helix" evidence="5">
    <location>
        <begin position="54"/>
        <end position="57"/>
    </location>
</feature>
<feature type="helix" evidence="5">
    <location>
        <begin position="59"/>
        <end position="81"/>
    </location>
</feature>
<feature type="helix" evidence="5">
    <location>
        <begin position="88"/>
        <end position="90"/>
    </location>
</feature>
<evidence type="ECO:0000250" key="1"/>
<evidence type="ECO:0000255" key="2"/>
<evidence type="ECO:0000269" key="3">
    <source>
    </source>
</evidence>
<evidence type="ECO:0000305" key="4"/>
<evidence type="ECO:0007829" key="5">
    <source>
        <dbReference type="PDB" id="1LRW"/>
    </source>
</evidence>
<organism>
    <name type="scientific">Paracoccus denitrificans</name>
    <dbReference type="NCBI Taxonomy" id="266"/>
    <lineage>
        <taxon>Bacteria</taxon>
        <taxon>Pseudomonadati</taxon>
        <taxon>Pseudomonadota</taxon>
        <taxon>Alphaproteobacteria</taxon>
        <taxon>Rhodobacterales</taxon>
        <taxon>Paracoccaceae</taxon>
        <taxon>Paracoccus</taxon>
    </lineage>
</organism>